<evidence type="ECO:0000255" key="1">
    <source>
        <dbReference type="HAMAP-Rule" id="MF_00925"/>
    </source>
</evidence>
<evidence type="ECO:0000256" key="2">
    <source>
        <dbReference type="SAM" id="MobiDB-lite"/>
    </source>
</evidence>
<sequence>MNPILKGVYSPARLGVVALTLFGILGVTGCSTAVDETQRAWMNKIFRPYVPDVVQGNFISSEQYAKLQLGMTREQVRQIMGTPLLASYFHANRWDYVFEFKRSGQTVGKERHVTVFFDGDKVVKFEGDALPTEVELVAEIDNYSKSKRSFWEVITDTNKLPVTPPLQQPEVLVTSKTDNLPAGAAVPAANTSGSFWDFFGSSKKDPDPQSPQLGPGTLNDVPKPADSK</sequence>
<accession>B1XT70</accession>
<keyword id="KW-0998">Cell outer membrane</keyword>
<keyword id="KW-0449">Lipoprotein</keyword>
<keyword id="KW-0472">Membrane</keyword>
<keyword id="KW-0564">Palmitate</keyword>
<keyword id="KW-0732">Signal</keyword>
<proteinExistence type="inferred from homology"/>
<protein>
    <recommendedName>
        <fullName evidence="1">Outer membrane protein assembly factor BamE</fullName>
    </recommendedName>
</protein>
<comment type="function">
    <text evidence="1">Part of the outer membrane protein assembly complex, which is involved in assembly and insertion of beta-barrel proteins into the outer membrane.</text>
</comment>
<comment type="subunit">
    <text evidence="1">Part of the Bam complex.</text>
</comment>
<comment type="subcellular location">
    <subcellularLocation>
        <location evidence="1">Cell outer membrane</location>
        <topology evidence="1">Lipid-anchor</topology>
    </subcellularLocation>
</comment>
<comment type="similarity">
    <text evidence="1">Belongs to the BamE family.</text>
</comment>
<feature type="signal peptide" evidence="1">
    <location>
        <begin position="1"/>
        <end position="29"/>
    </location>
</feature>
<feature type="chain" id="PRO_5000330995" description="Outer membrane protein assembly factor BamE">
    <location>
        <begin position="30"/>
        <end position="228"/>
    </location>
</feature>
<feature type="region of interest" description="Disordered" evidence="2">
    <location>
        <begin position="197"/>
        <end position="228"/>
    </location>
</feature>
<feature type="lipid moiety-binding region" description="N-palmitoyl cysteine" evidence="1">
    <location>
        <position position="30"/>
    </location>
</feature>
<feature type="lipid moiety-binding region" description="S-diacylglycerol cysteine" evidence="1">
    <location>
        <position position="30"/>
    </location>
</feature>
<organism>
    <name type="scientific">Polynucleobacter necessarius subsp. necessarius (strain STIR1)</name>
    <dbReference type="NCBI Taxonomy" id="452638"/>
    <lineage>
        <taxon>Bacteria</taxon>
        <taxon>Pseudomonadati</taxon>
        <taxon>Pseudomonadota</taxon>
        <taxon>Betaproteobacteria</taxon>
        <taxon>Burkholderiales</taxon>
        <taxon>Burkholderiaceae</taxon>
        <taxon>Polynucleobacter</taxon>
    </lineage>
</organism>
<dbReference type="EMBL" id="CP001010">
    <property type="protein sequence ID" value="ACB43547.1"/>
    <property type="molecule type" value="Genomic_DNA"/>
</dbReference>
<dbReference type="SMR" id="B1XT70"/>
<dbReference type="STRING" id="452638.Pnec_0252"/>
<dbReference type="KEGG" id="pne:Pnec_0252"/>
<dbReference type="eggNOG" id="COG2913">
    <property type="taxonomic scope" value="Bacteria"/>
</dbReference>
<dbReference type="HOGENOM" id="CLU_1213920_0_0_4"/>
<dbReference type="OrthoDB" id="9808250at2"/>
<dbReference type="GO" id="GO:1990063">
    <property type="term" value="C:Bam protein complex"/>
    <property type="evidence" value="ECO:0007669"/>
    <property type="project" value="TreeGrafter"/>
</dbReference>
<dbReference type="GO" id="GO:0030674">
    <property type="term" value="F:protein-macromolecule adaptor activity"/>
    <property type="evidence" value="ECO:0007669"/>
    <property type="project" value="TreeGrafter"/>
</dbReference>
<dbReference type="GO" id="GO:0043165">
    <property type="term" value="P:Gram-negative-bacterium-type cell outer membrane assembly"/>
    <property type="evidence" value="ECO:0007669"/>
    <property type="project" value="UniProtKB-UniRule"/>
</dbReference>
<dbReference type="GO" id="GO:0051205">
    <property type="term" value="P:protein insertion into membrane"/>
    <property type="evidence" value="ECO:0007669"/>
    <property type="project" value="UniProtKB-UniRule"/>
</dbReference>
<dbReference type="Gene3D" id="3.30.1450.10">
    <property type="match status" value="1"/>
</dbReference>
<dbReference type="HAMAP" id="MF_00925">
    <property type="entry name" value="OM_assembly_BamE"/>
    <property type="match status" value="1"/>
</dbReference>
<dbReference type="InterPro" id="IPR026592">
    <property type="entry name" value="BamE"/>
</dbReference>
<dbReference type="InterPro" id="IPR037873">
    <property type="entry name" value="BamE-like"/>
</dbReference>
<dbReference type="InterPro" id="IPR007450">
    <property type="entry name" value="BamE_dom"/>
</dbReference>
<dbReference type="PANTHER" id="PTHR37482">
    <property type="entry name" value="OUTER MEMBRANE PROTEIN ASSEMBLY FACTOR BAME"/>
    <property type="match status" value="1"/>
</dbReference>
<dbReference type="PANTHER" id="PTHR37482:SF1">
    <property type="entry name" value="OUTER MEMBRANE PROTEIN ASSEMBLY FACTOR BAME"/>
    <property type="match status" value="1"/>
</dbReference>
<dbReference type="Pfam" id="PF04355">
    <property type="entry name" value="BamE"/>
    <property type="match status" value="1"/>
</dbReference>
<dbReference type="PROSITE" id="PS51257">
    <property type="entry name" value="PROKAR_LIPOPROTEIN"/>
    <property type="match status" value="1"/>
</dbReference>
<reference key="1">
    <citation type="journal article" date="2013" name="Proc. Natl. Acad. Sci. U.S.A.">
        <title>Polynucleobacter necessarius, a model for genome reduction in both free-living and symbiotic bacteria.</title>
        <authorList>
            <person name="Boscaro V."/>
            <person name="Felletti M."/>
            <person name="Vannini C."/>
            <person name="Ackerman M.S."/>
            <person name="Chain P.S."/>
            <person name="Malfatti S."/>
            <person name="Vergez L.M."/>
            <person name="Shin M."/>
            <person name="Doak T.G."/>
            <person name="Lynch M."/>
            <person name="Petroni G."/>
        </authorList>
    </citation>
    <scope>NUCLEOTIDE SEQUENCE [LARGE SCALE GENOMIC DNA]</scope>
    <source>
        <strain>STIR1</strain>
    </source>
</reference>
<name>BAME_POLNS</name>
<gene>
    <name evidence="1" type="primary">bamE</name>
    <name type="ordered locus">Pnec_0252</name>
</gene>